<reference key="1">
    <citation type="journal article" date="2004" name="Genome Res.">
        <title>The status, quality, and expansion of the NIH full-length cDNA project: the Mammalian Gene Collection (MGC).</title>
        <authorList>
            <consortium name="The MGC Project Team"/>
        </authorList>
    </citation>
    <scope>NUCLEOTIDE SEQUENCE [LARGE SCALE MRNA]</scope>
    <source>
        <tissue>Lung</tissue>
    </source>
</reference>
<name>PHF11_RAT</name>
<organism>
    <name type="scientific">Rattus norvegicus</name>
    <name type="common">Rat</name>
    <dbReference type="NCBI Taxonomy" id="10116"/>
    <lineage>
        <taxon>Eukaryota</taxon>
        <taxon>Metazoa</taxon>
        <taxon>Chordata</taxon>
        <taxon>Craniata</taxon>
        <taxon>Vertebrata</taxon>
        <taxon>Euteleostomi</taxon>
        <taxon>Mammalia</taxon>
        <taxon>Eutheria</taxon>
        <taxon>Euarchontoglires</taxon>
        <taxon>Glires</taxon>
        <taxon>Rodentia</taxon>
        <taxon>Myomorpha</taxon>
        <taxon>Muroidea</taxon>
        <taxon>Muridae</taxon>
        <taxon>Murinae</taxon>
        <taxon>Rattus</taxon>
    </lineage>
</organism>
<protein>
    <recommendedName>
        <fullName>PHD finger protein 11</fullName>
    </recommendedName>
</protein>
<feature type="chain" id="PRO_0000385016" description="PHD finger protein 11">
    <location>
        <begin position="1"/>
        <end position="336"/>
    </location>
</feature>
<feature type="zinc finger region" description="C2HC pre-PHD-type" evidence="2">
    <location>
        <begin position="25"/>
        <end position="61"/>
    </location>
</feature>
<feature type="zinc finger region" description="PHD-type" evidence="2">
    <location>
        <begin position="91"/>
        <end position="143"/>
    </location>
</feature>
<feature type="region of interest" description="Disordered" evidence="3">
    <location>
        <begin position="1"/>
        <end position="20"/>
    </location>
</feature>
<feature type="region of interest" description="Disordered" evidence="3">
    <location>
        <begin position="139"/>
        <end position="179"/>
    </location>
</feature>
<feature type="region of interest" description="Disordered" evidence="3">
    <location>
        <begin position="303"/>
        <end position="336"/>
    </location>
</feature>
<feature type="compositionally biased region" description="Low complexity" evidence="3">
    <location>
        <begin position="303"/>
        <end position="314"/>
    </location>
</feature>
<keyword id="KW-0010">Activator</keyword>
<keyword id="KW-0479">Metal-binding</keyword>
<keyword id="KW-0539">Nucleus</keyword>
<keyword id="KW-1185">Reference proteome</keyword>
<keyword id="KW-0804">Transcription</keyword>
<keyword id="KW-0805">Transcription regulation</keyword>
<keyword id="KW-0862">Zinc</keyword>
<keyword id="KW-0863">Zinc-finger</keyword>
<accession>Q5I0E2</accession>
<proteinExistence type="evidence at transcript level"/>
<dbReference type="EMBL" id="BC088433">
    <property type="protein sequence ID" value="AAH88433.1"/>
    <property type="molecule type" value="mRNA"/>
</dbReference>
<dbReference type="RefSeq" id="NP_001019443.1">
    <property type="nucleotide sequence ID" value="NM_001024272.2"/>
</dbReference>
<dbReference type="SMR" id="Q5I0E2"/>
<dbReference type="FunCoup" id="Q5I0E2">
    <property type="interactions" value="222"/>
</dbReference>
<dbReference type="STRING" id="10116.ENSRNOP00000066769"/>
<dbReference type="iPTMnet" id="Q5I0E2"/>
<dbReference type="PhosphoSitePlus" id="Q5I0E2"/>
<dbReference type="PaxDb" id="10116-ENSRNOP00000015412"/>
<dbReference type="Ensembl" id="ENSRNOT00000114019.1">
    <property type="protein sequence ID" value="ENSRNOP00000086591.1"/>
    <property type="gene ID" value="ENSRNOG00000053891.2"/>
</dbReference>
<dbReference type="GeneID" id="361051"/>
<dbReference type="KEGG" id="rno:361051"/>
<dbReference type="UCSC" id="RGD:1310853">
    <property type="organism name" value="rat"/>
</dbReference>
<dbReference type="AGR" id="RGD:1310853"/>
<dbReference type="CTD" id="51131"/>
<dbReference type="RGD" id="1310853">
    <property type="gene designation" value="Phf11"/>
</dbReference>
<dbReference type="eggNOG" id="KOG1084">
    <property type="taxonomic scope" value="Eukaryota"/>
</dbReference>
<dbReference type="GeneTree" id="ENSGT00950000182865"/>
<dbReference type="InParanoid" id="Q5I0E2"/>
<dbReference type="OMA" id="ECEDHDS"/>
<dbReference type="OrthoDB" id="70683at9989"/>
<dbReference type="PhylomeDB" id="Q5I0E2"/>
<dbReference type="PRO" id="PR:Q5I0E2"/>
<dbReference type="Proteomes" id="UP000002494">
    <property type="component" value="Chromosome 15"/>
</dbReference>
<dbReference type="GO" id="GO:0005634">
    <property type="term" value="C:nucleus"/>
    <property type="evidence" value="ECO:0000318"/>
    <property type="project" value="GO_Central"/>
</dbReference>
<dbReference type="GO" id="GO:0008270">
    <property type="term" value="F:zinc ion binding"/>
    <property type="evidence" value="ECO:0007669"/>
    <property type="project" value="UniProtKB-KW"/>
</dbReference>
<dbReference type="FunFam" id="3.30.40.10:FF:000425">
    <property type="entry name" value="PHD finger protein 11"/>
    <property type="match status" value="1"/>
</dbReference>
<dbReference type="Gene3D" id="3.30.40.10">
    <property type="entry name" value="Zinc/RING finger domain, C3HC4 (zinc finger)"/>
    <property type="match status" value="1"/>
</dbReference>
<dbReference type="InterPro" id="IPR034732">
    <property type="entry name" value="EPHD"/>
</dbReference>
<dbReference type="InterPro" id="IPR051188">
    <property type="entry name" value="PHD-type_Zinc_Finger"/>
</dbReference>
<dbReference type="InterPro" id="IPR011011">
    <property type="entry name" value="Znf_FYVE_PHD"/>
</dbReference>
<dbReference type="InterPro" id="IPR001965">
    <property type="entry name" value="Znf_PHD"/>
</dbReference>
<dbReference type="InterPro" id="IPR013083">
    <property type="entry name" value="Znf_RING/FYVE/PHD"/>
</dbReference>
<dbReference type="PANTHER" id="PTHR12420">
    <property type="entry name" value="PHD FINGER PROTEIN"/>
    <property type="match status" value="1"/>
</dbReference>
<dbReference type="PANTHER" id="PTHR12420:SF4">
    <property type="entry name" value="PHD FINGER PROTEIN 11"/>
    <property type="match status" value="1"/>
</dbReference>
<dbReference type="Pfam" id="PF13771">
    <property type="entry name" value="zf-HC5HC2H"/>
    <property type="match status" value="1"/>
</dbReference>
<dbReference type="SMART" id="SM00249">
    <property type="entry name" value="PHD"/>
    <property type="match status" value="1"/>
</dbReference>
<dbReference type="SUPFAM" id="SSF57903">
    <property type="entry name" value="FYVE/PHD zinc finger"/>
    <property type="match status" value="1"/>
</dbReference>
<dbReference type="PROSITE" id="PS51805">
    <property type="entry name" value="EPHD"/>
    <property type="match status" value="1"/>
</dbReference>
<comment type="function">
    <text evidence="1">Positive regulator of Th1-type cytokine gene expression.</text>
</comment>
<comment type="subunit">
    <text evidence="1">Interacts with BRCA1 and RELA.</text>
</comment>
<comment type="subcellular location">
    <subcellularLocation>
        <location evidence="1">Nucleus</location>
    </subcellularLocation>
</comment>
<evidence type="ECO:0000250" key="1"/>
<evidence type="ECO:0000255" key="2">
    <source>
        <dbReference type="PROSITE-ProRule" id="PRU01146"/>
    </source>
</evidence>
<evidence type="ECO:0000256" key="3">
    <source>
        <dbReference type="SAM" id="MobiDB-lite"/>
    </source>
</evidence>
<gene>
    <name type="primary">Phf11</name>
</gene>
<sequence length="336" mass="37214">MAEETAPPCGPVSTGGSLSPEKMEKRTCALCPDGHEWSVIYFAPSANIAAHENCLLYSSGLVECGPHDPRNPARSFAVKSVKKEIWRGRRLKCSLCNKGGATVGCDLSSCRKSYHYVCAKKDHAIPQVDEDLGTYKIFCPEHPPQQEETTERADSPSVKKTGKKKSLSSGPPTEPKKMKFSRFKRLMKEEPHGHKDAAVKAPFLKKCLEAGLLTELFEQILEKMDSIHGRFMDETASESDYEGIKTLLFDCGLFGDILRKFQEVIKSKTCEYEERLNQMKQKLEALADLQENLCSFQECGDLDPSGSTSGSLLPPEDHQCRCQESPEVQAGSGDSL</sequence>